<sequence>MSHRDTLFSAPIARLGDWTFDERVAEVFPDMIQRSVPGYSNIISMIGMLAERFVQPNTQVYDLGCSLGAATLSVRRNIRHEHCRIIAVDNSPAMIERCRRHIDAYKAPTPVEVVEGDIRDITIENASMVVLNFTLQFLEPAERQALLDKIYLGLNPGGALVLSEKFSFEDAKVGELLFNMHHDFKRANGYSELEISQKRSMLENVMLTDSVETHKARLRQAGFEHSELWFQCFNFGSLVALKAGVAA</sequence>
<evidence type="ECO:0000255" key="1">
    <source>
        <dbReference type="HAMAP-Rule" id="MF_01589"/>
    </source>
</evidence>
<name>CMOA_SALPK</name>
<gene>
    <name evidence="1" type="primary">cmoA</name>
    <name type="ordered locus">SSPA0898</name>
</gene>
<proteinExistence type="inferred from homology"/>
<accession>B5BH50</accession>
<comment type="function">
    <text evidence="1">Catalyzes the conversion of S-adenosyl-L-methionine (SAM) to carboxy-S-adenosyl-L-methionine (Cx-SAM).</text>
</comment>
<comment type="catalytic activity">
    <reaction evidence="1">
        <text>prephenate + S-adenosyl-L-methionine = carboxy-S-adenosyl-L-methionine + 3-phenylpyruvate + H2O</text>
        <dbReference type="Rhea" id="RHEA:51692"/>
        <dbReference type="ChEBI" id="CHEBI:15377"/>
        <dbReference type="ChEBI" id="CHEBI:18005"/>
        <dbReference type="ChEBI" id="CHEBI:29934"/>
        <dbReference type="ChEBI" id="CHEBI:59789"/>
        <dbReference type="ChEBI" id="CHEBI:134278"/>
    </reaction>
</comment>
<comment type="subunit">
    <text evidence="1">Homodimer.</text>
</comment>
<comment type="similarity">
    <text evidence="1">Belongs to the class I-like SAM-binding methyltransferase superfamily. Cx-SAM synthase family.</text>
</comment>
<dbReference type="EC" id="2.1.3.-" evidence="1"/>
<dbReference type="EMBL" id="FM200053">
    <property type="protein sequence ID" value="CAR59042.1"/>
    <property type="molecule type" value="Genomic_DNA"/>
</dbReference>
<dbReference type="RefSeq" id="WP_000019609.1">
    <property type="nucleotide sequence ID" value="NC_011147.1"/>
</dbReference>
<dbReference type="SMR" id="B5BH50"/>
<dbReference type="KEGG" id="sek:SSPA0898"/>
<dbReference type="HOGENOM" id="CLU_078475_0_0_6"/>
<dbReference type="Proteomes" id="UP000001869">
    <property type="component" value="Chromosome"/>
</dbReference>
<dbReference type="GO" id="GO:0016743">
    <property type="term" value="F:carboxyl- or carbamoyltransferase activity"/>
    <property type="evidence" value="ECO:0007669"/>
    <property type="project" value="UniProtKB-UniRule"/>
</dbReference>
<dbReference type="GO" id="GO:1904047">
    <property type="term" value="F:S-adenosyl-L-methionine binding"/>
    <property type="evidence" value="ECO:0007669"/>
    <property type="project" value="UniProtKB-UniRule"/>
</dbReference>
<dbReference type="GO" id="GO:0002098">
    <property type="term" value="P:tRNA wobble uridine modification"/>
    <property type="evidence" value="ECO:0007669"/>
    <property type="project" value="InterPro"/>
</dbReference>
<dbReference type="CDD" id="cd02440">
    <property type="entry name" value="AdoMet_MTases"/>
    <property type="match status" value="1"/>
</dbReference>
<dbReference type="FunFam" id="3.40.50.150:FF:000030">
    <property type="entry name" value="Carboxy-S-adenosyl-L-methionine synthase"/>
    <property type="match status" value="1"/>
</dbReference>
<dbReference type="Gene3D" id="3.40.50.150">
    <property type="entry name" value="Vaccinia Virus protein VP39"/>
    <property type="match status" value="1"/>
</dbReference>
<dbReference type="HAMAP" id="MF_01589">
    <property type="entry name" value="Cx_SAM_synthase"/>
    <property type="match status" value="1"/>
</dbReference>
<dbReference type="InterPro" id="IPR005271">
    <property type="entry name" value="CmoA"/>
</dbReference>
<dbReference type="InterPro" id="IPR041698">
    <property type="entry name" value="Methyltransf_25"/>
</dbReference>
<dbReference type="InterPro" id="IPR029063">
    <property type="entry name" value="SAM-dependent_MTases_sf"/>
</dbReference>
<dbReference type="NCBIfam" id="TIGR00740">
    <property type="entry name" value="carboxy-S-adenosyl-L-methionine synthase CmoA"/>
    <property type="match status" value="1"/>
</dbReference>
<dbReference type="NCBIfam" id="NF011995">
    <property type="entry name" value="PRK15451.1"/>
    <property type="match status" value="1"/>
</dbReference>
<dbReference type="PANTHER" id="PTHR43861:SF2">
    <property type="entry name" value="CARBOXY-S-ADENOSYL-L-METHIONINE SYNTHASE"/>
    <property type="match status" value="1"/>
</dbReference>
<dbReference type="PANTHER" id="PTHR43861">
    <property type="entry name" value="TRANS-ACONITATE 2-METHYLTRANSFERASE-RELATED"/>
    <property type="match status" value="1"/>
</dbReference>
<dbReference type="Pfam" id="PF13649">
    <property type="entry name" value="Methyltransf_25"/>
    <property type="match status" value="1"/>
</dbReference>
<dbReference type="PIRSF" id="PIRSF006325">
    <property type="entry name" value="MeTrfase_bac"/>
    <property type="match status" value="1"/>
</dbReference>
<dbReference type="SUPFAM" id="SSF53335">
    <property type="entry name" value="S-adenosyl-L-methionine-dependent methyltransferases"/>
    <property type="match status" value="1"/>
</dbReference>
<organism>
    <name type="scientific">Salmonella paratyphi A (strain AKU_12601)</name>
    <dbReference type="NCBI Taxonomy" id="554290"/>
    <lineage>
        <taxon>Bacteria</taxon>
        <taxon>Pseudomonadati</taxon>
        <taxon>Pseudomonadota</taxon>
        <taxon>Gammaproteobacteria</taxon>
        <taxon>Enterobacterales</taxon>
        <taxon>Enterobacteriaceae</taxon>
        <taxon>Salmonella</taxon>
    </lineage>
</organism>
<protein>
    <recommendedName>
        <fullName evidence="1">Carboxy-S-adenosyl-L-methionine synthase</fullName>
        <shortName evidence="1">Cx-SAM synthase</shortName>
        <ecNumber evidence="1">2.1.3.-</ecNumber>
    </recommendedName>
</protein>
<reference key="1">
    <citation type="journal article" date="2009" name="BMC Genomics">
        <title>Pseudogene accumulation in the evolutionary histories of Salmonella enterica serovars Paratyphi A and Typhi.</title>
        <authorList>
            <person name="Holt K.E."/>
            <person name="Thomson N.R."/>
            <person name="Wain J."/>
            <person name="Langridge G.C."/>
            <person name="Hasan R."/>
            <person name="Bhutta Z.A."/>
            <person name="Quail M.A."/>
            <person name="Norbertczak H."/>
            <person name="Walker D."/>
            <person name="Simmonds M."/>
            <person name="White B."/>
            <person name="Bason N."/>
            <person name="Mungall K."/>
            <person name="Dougan G."/>
            <person name="Parkhill J."/>
        </authorList>
    </citation>
    <scope>NUCLEOTIDE SEQUENCE [LARGE SCALE GENOMIC DNA]</scope>
    <source>
        <strain>AKU_12601</strain>
    </source>
</reference>
<keyword id="KW-0949">S-adenosyl-L-methionine</keyword>
<keyword id="KW-0808">Transferase</keyword>
<feature type="chain" id="PRO_1000201367" description="Carboxy-S-adenosyl-L-methionine synthase">
    <location>
        <begin position="1"/>
        <end position="247"/>
    </location>
</feature>
<feature type="binding site" evidence="1">
    <location>
        <position position="39"/>
    </location>
    <ligand>
        <name>S-adenosyl-L-methionine</name>
        <dbReference type="ChEBI" id="CHEBI:59789"/>
    </ligand>
</feature>
<feature type="binding site" evidence="1">
    <location>
        <begin position="64"/>
        <end position="66"/>
    </location>
    <ligand>
        <name>S-adenosyl-L-methionine</name>
        <dbReference type="ChEBI" id="CHEBI:59789"/>
    </ligand>
</feature>
<feature type="binding site" evidence="1">
    <location>
        <begin position="89"/>
        <end position="90"/>
    </location>
    <ligand>
        <name>S-adenosyl-L-methionine</name>
        <dbReference type="ChEBI" id="CHEBI:59789"/>
    </ligand>
</feature>
<feature type="binding site" evidence="1">
    <location>
        <begin position="117"/>
        <end position="118"/>
    </location>
    <ligand>
        <name>S-adenosyl-L-methionine</name>
        <dbReference type="ChEBI" id="CHEBI:59789"/>
    </ligand>
</feature>
<feature type="binding site" evidence="1">
    <location>
        <position position="132"/>
    </location>
    <ligand>
        <name>S-adenosyl-L-methionine</name>
        <dbReference type="ChEBI" id="CHEBI:59789"/>
    </ligand>
</feature>
<feature type="binding site" evidence="1">
    <location>
        <position position="199"/>
    </location>
    <ligand>
        <name>S-adenosyl-L-methionine</name>
        <dbReference type="ChEBI" id="CHEBI:59789"/>
    </ligand>
</feature>